<dbReference type="EMBL" id="X53280">
    <property type="protein sequence ID" value="CAA37375.1"/>
    <property type="molecule type" value="mRNA"/>
</dbReference>
<dbReference type="EMBL" id="X53281">
    <property type="protein sequence ID" value="CAA37376.1"/>
    <property type="molecule type" value="mRNA"/>
</dbReference>
<dbReference type="EMBL" id="M90357">
    <property type="protein sequence ID" value="AAA58398.1"/>
    <property type="molecule type" value="Genomic_DNA"/>
</dbReference>
<dbReference type="EMBL" id="M90352">
    <property type="protein sequence ID" value="AAA58398.1"/>
    <property type="status" value="JOINED"/>
    <property type="molecule type" value="Genomic_DNA"/>
</dbReference>
<dbReference type="EMBL" id="X74070">
    <property type="protein sequence ID" value="CAA52200.1"/>
    <property type="molecule type" value="mRNA"/>
</dbReference>
<dbReference type="EMBL" id="AB062126">
    <property type="protein sequence ID" value="BAB93458.1"/>
    <property type="molecule type" value="mRNA"/>
</dbReference>
<dbReference type="EMBL" id="BT007120">
    <property type="protein sequence ID" value="AAP35784.1"/>
    <property type="molecule type" value="mRNA"/>
</dbReference>
<dbReference type="EMBL" id="AK291125">
    <property type="protein sequence ID" value="BAF83814.1"/>
    <property type="molecule type" value="mRNA"/>
</dbReference>
<dbReference type="EMBL" id="CH471084">
    <property type="protein sequence ID" value="EAW95727.1"/>
    <property type="molecule type" value="Genomic_DNA"/>
</dbReference>
<dbReference type="EMBL" id="BC008062">
    <property type="protein sequence ID" value="AAH08062.1"/>
    <property type="molecule type" value="mRNA"/>
</dbReference>
<dbReference type="CCDS" id="CCDS34185.1">
    <molecule id="P20290-1"/>
</dbReference>
<dbReference type="CCDS" id="CCDS4019.1">
    <molecule id="P20290-2"/>
</dbReference>
<dbReference type="PIR" id="JC1235">
    <property type="entry name" value="JC1235"/>
</dbReference>
<dbReference type="RefSeq" id="NP_001032726.1">
    <molecule id="P20290-1"/>
    <property type="nucleotide sequence ID" value="NM_001037637.2"/>
</dbReference>
<dbReference type="RefSeq" id="NP_001198.2">
    <molecule id="P20290-2"/>
    <property type="nucleotide sequence ID" value="NM_001207.4"/>
</dbReference>
<dbReference type="PDB" id="3LKX">
    <property type="method" value="X-ray"/>
    <property type="resolution" value="2.50 A"/>
    <property type="chains" value="A=97-162"/>
</dbReference>
<dbReference type="PDB" id="3MCB">
    <property type="method" value="X-ray"/>
    <property type="resolution" value="1.90 A"/>
    <property type="chains" value="B=97-154"/>
</dbReference>
<dbReference type="PDB" id="7QWQ">
    <property type="method" value="EM"/>
    <property type="resolution" value="2.83 A"/>
    <property type="chains" value="u=45-206"/>
</dbReference>
<dbReference type="PDB" id="7QWR">
    <property type="method" value="EM"/>
    <property type="resolution" value="2.90 A"/>
    <property type="chains" value="u=45-206"/>
</dbReference>
<dbReference type="PDB" id="9F1B">
    <property type="method" value="EM"/>
    <property type="resolution" value="3.01 A"/>
    <property type="chains" value="Cu=45-206"/>
</dbReference>
<dbReference type="PDB" id="9F1C">
    <property type="method" value="EM"/>
    <property type="resolution" value="3.78 A"/>
    <property type="chains" value="Cu=45-206"/>
</dbReference>
<dbReference type="PDB" id="9F1D">
    <property type="method" value="EM"/>
    <property type="resolution" value="3.26 A"/>
    <property type="chains" value="Cu=45-206"/>
</dbReference>
<dbReference type="PDB" id="9FQ0">
    <property type="method" value="EM"/>
    <property type="resolution" value="4.67 A"/>
    <property type="chains" value="D=1-206"/>
</dbReference>
<dbReference type="PDBsum" id="3LKX"/>
<dbReference type="PDBsum" id="3MCB"/>
<dbReference type="PDBsum" id="7QWQ"/>
<dbReference type="PDBsum" id="7QWR"/>
<dbReference type="PDBsum" id="9F1B"/>
<dbReference type="PDBsum" id="9F1C"/>
<dbReference type="PDBsum" id="9F1D"/>
<dbReference type="PDBsum" id="9FQ0"/>
<dbReference type="EMDB" id="EMD-14191"/>
<dbReference type="EMDB" id="EMD-14192"/>
<dbReference type="EMDB" id="EMD-50124"/>
<dbReference type="EMDB" id="EMD-50125"/>
<dbReference type="EMDB" id="EMD-50126"/>
<dbReference type="EMDB" id="EMD-50642"/>
<dbReference type="SMR" id="P20290"/>
<dbReference type="BioGRID" id="107154">
    <property type="interactions" value="816"/>
</dbReference>
<dbReference type="ComplexPortal" id="CPX-676">
    <property type="entry name" value="Nascent polypeptide-associated complex"/>
</dbReference>
<dbReference type="CORUM" id="P20290"/>
<dbReference type="FunCoup" id="P20290">
    <property type="interactions" value="4075"/>
</dbReference>
<dbReference type="IntAct" id="P20290">
    <property type="interactions" value="95"/>
</dbReference>
<dbReference type="MINT" id="P20290"/>
<dbReference type="STRING" id="9606.ENSP00000369965"/>
<dbReference type="GlyGen" id="P20290">
    <property type="glycosylation" value="1 site, 1 O-linked glycan (1 site)"/>
</dbReference>
<dbReference type="iPTMnet" id="P20290"/>
<dbReference type="MetOSite" id="P20290"/>
<dbReference type="PhosphoSitePlus" id="P20290"/>
<dbReference type="SwissPalm" id="P20290"/>
<dbReference type="BioMuta" id="BTF3"/>
<dbReference type="DMDM" id="115143"/>
<dbReference type="jPOST" id="P20290"/>
<dbReference type="MassIVE" id="P20290"/>
<dbReference type="PaxDb" id="9606-ENSP00000369965"/>
<dbReference type="PeptideAtlas" id="P20290"/>
<dbReference type="ProteomicsDB" id="53742">
    <molecule id="P20290-1"/>
</dbReference>
<dbReference type="ProteomicsDB" id="53743">
    <molecule id="P20290-2"/>
</dbReference>
<dbReference type="Pumba" id="P20290"/>
<dbReference type="TopDownProteomics" id="P20290-1">
    <molecule id="P20290-1"/>
</dbReference>
<dbReference type="TopDownProteomics" id="P20290-2">
    <molecule id="P20290-2"/>
</dbReference>
<dbReference type="Antibodypedia" id="4573">
    <property type="antibodies" value="207 antibodies from 29 providers"/>
</dbReference>
<dbReference type="DNASU" id="689"/>
<dbReference type="Ensembl" id="ENST00000335895.12">
    <molecule id="P20290-2"/>
    <property type="protein sequence ID" value="ENSP00000338516.8"/>
    <property type="gene ID" value="ENSG00000145741.17"/>
</dbReference>
<dbReference type="Ensembl" id="ENST00000380591.8">
    <molecule id="P20290-1"/>
    <property type="protein sequence ID" value="ENSP00000369965.3"/>
    <property type="gene ID" value="ENSG00000145741.17"/>
</dbReference>
<dbReference type="GeneID" id="689"/>
<dbReference type="KEGG" id="hsa:689"/>
<dbReference type="MANE-Select" id="ENST00000380591.8">
    <property type="protein sequence ID" value="ENSP00000369965.3"/>
    <property type="RefSeq nucleotide sequence ID" value="NM_001037637.2"/>
    <property type="RefSeq protein sequence ID" value="NP_001032726.1"/>
</dbReference>
<dbReference type="UCSC" id="uc003kcq.2">
    <molecule id="P20290-1"/>
    <property type="organism name" value="human"/>
</dbReference>
<dbReference type="AGR" id="HGNC:1125"/>
<dbReference type="CTD" id="689"/>
<dbReference type="DisGeNET" id="689"/>
<dbReference type="GeneCards" id="BTF3"/>
<dbReference type="HGNC" id="HGNC:1125">
    <property type="gene designation" value="BTF3"/>
</dbReference>
<dbReference type="HPA" id="ENSG00000145741">
    <property type="expression patterns" value="Low tissue specificity"/>
</dbReference>
<dbReference type="MIM" id="602542">
    <property type="type" value="gene"/>
</dbReference>
<dbReference type="neXtProt" id="NX_P20290"/>
<dbReference type="OpenTargets" id="ENSG00000145741"/>
<dbReference type="PharmGKB" id="PA25445"/>
<dbReference type="VEuPathDB" id="HostDB:ENSG00000145741"/>
<dbReference type="eggNOG" id="KOG2240">
    <property type="taxonomic scope" value="Eukaryota"/>
</dbReference>
<dbReference type="GeneTree" id="ENSGT00940000153288"/>
<dbReference type="HOGENOM" id="CLU_098726_3_0_1"/>
<dbReference type="InParanoid" id="P20290"/>
<dbReference type="OMA" id="AGDTYME"/>
<dbReference type="OrthoDB" id="9531199at2759"/>
<dbReference type="PAN-GO" id="P20290">
    <property type="GO annotations" value="3 GO annotations based on evolutionary models"/>
</dbReference>
<dbReference type="PhylomeDB" id="P20290"/>
<dbReference type="TreeFam" id="TF317546"/>
<dbReference type="PathwayCommons" id="P20290"/>
<dbReference type="SignaLink" id="P20290"/>
<dbReference type="SIGNOR" id="P20290"/>
<dbReference type="BioGRID-ORCS" id="689">
    <property type="hits" value="278 hits in 1150 CRISPR screens"/>
</dbReference>
<dbReference type="CD-CODE" id="91857CE7">
    <property type="entry name" value="Nucleolus"/>
</dbReference>
<dbReference type="ChiTaRS" id="BTF3">
    <property type="organism name" value="human"/>
</dbReference>
<dbReference type="EvolutionaryTrace" id="P20290"/>
<dbReference type="GeneWiki" id="BTF3"/>
<dbReference type="GenomeRNAi" id="689"/>
<dbReference type="Pharos" id="P20290">
    <property type="development level" value="Tbio"/>
</dbReference>
<dbReference type="PRO" id="PR:P20290"/>
<dbReference type="Proteomes" id="UP000005640">
    <property type="component" value="Chromosome 5"/>
</dbReference>
<dbReference type="RNAct" id="P20290">
    <property type="molecule type" value="protein"/>
</dbReference>
<dbReference type="Bgee" id="ENSG00000145741">
    <property type="expression patterns" value="Expressed in mucosa of sigmoid colon and 211 other cell types or tissues"/>
</dbReference>
<dbReference type="ExpressionAtlas" id="P20290">
    <property type="expression patterns" value="baseline and differential"/>
</dbReference>
<dbReference type="GO" id="GO:0005737">
    <property type="term" value="C:cytoplasm"/>
    <property type="evidence" value="ECO:0000314"/>
    <property type="project" value="ComplexPortal"/>
</dbReference>
<dbReference type="GO" id="GO:0005829">
    <property type="term" value="C:cytosol"/>
    <property type="evidence" value="ECO:0000314"/>
    <property type="project" value="HPA"/>
</dbReference>
<dbReference type="GO" id="GO:0005854">
    <property type="term" value="C:nascent polypeptide-associated complex"/>
    <property type="evidence" value="ECO:0000353"/>
    <property type="project" value="ComplexPortal"/>
</dbReference>
<dbReference type="GO" id="GO:0005634">
    <property type="term" value="C:nucleus"/>
    <property type="evidence" value="ECO:0000250"/>
    <property type="project" value="UniProtKB"/>
</dbReference>
<dbReference type="GO" id="GO:0003723">
    <property type="term" value="F:RNA binding"/>
    <property type="evidence" value="ECO:0007005"/>
    <property type="project" value="UniProtKB"/>
</dbReference>
<dbReference type="GO" id="GO:0001701">
    <property type="term" value="P:in utero embryonic development"/>
    <property type="evidence" value="ECO:0007669"/>
    <property type="project" value="Ensembl"/>
</dbReference>
<dbReference type="GO" id="GO:1905551">
    <property type="term" value="P:negative regulation of protein localization to endoplasmic reticulum"/>
    <property type="evidence" value="ECO:0000314"/>
    <property type="project" value="ComplexPortal"/>
</dbReference>
<dbReference type="GO" id="GO:0015031">
    <property type="term" value="P:protein transport"/>
    <property type="evidence" value="ECO:0007669"/>
    <property type="project" value="UniProtKB-KW"/>
</dbReference>
<dbReference type="CDD" id="cd22055">
    <property type="entry name" value="NAC_BTF3"/>
    <property type="match status" value="1"/>
</dbReference>
<dbReference type="FunFam" id="2.20.70.30:FF:000001">
    <property type="entry name" value="Transcription factor BTF3 homolog"/>
    <property type="match status" value="1"/>
</dbReference>
<dbReference type="Gene3D" id="2.20.70.30">
    <property type="entry name" value="Nascent polypeptide-associated complex domain"/>
    <property type="match status" value="1"/>
</dbReference>
<dbReference type="IDEAL" id="IID00444"/>
<dbReference type="InterPro" id="IPR039370">
    <property type="entry name" value="BTF3"/>
</dbReference>
<dbReference type="InterPro" id="IPR038187">
    <property type="entry name" value="NAC_A/B_dom_sf"/>
</dbReference>
<dbReference type="InterPro" id="IPR002715">
    <property type="entry name" value="Nas_poly-pep-assoc_cplx_dom"/>
</dbReference>
<dbReference type="PANTHER" id="PTHR10351">
    <property type="entry name" value="TRANSCRIPTION FACTOR BTF3 FAMILY MEMBER"/>
    <property type="match status" value="1"/>
</dbReference>
<dbReference type="Pfam" id="PF01849">
    <property type="entry name" value="NAC"/>
    <property type="match status" value="1"/>
</dbReference>
<dbReference type="SMART" id="SM01407">
    <property type="entry name" value="NAC"/>
    <property type="match status" value="1"/>
</dbReference>
<dbReference type="PROSITE" id="PS51151">
    <property type="entry name" value="NAC_AB"/>
    <property type="match status" value="1"/>
</dbReference>
<comment type="function">
    <text evidence="3">When associated with NACA, prevents inappropriate targeting of non-secretory polypeptides to the endoplasmic reticulum (ER). Binds to nascent polypeptide chains as they emerge from the ribosome and blocks their interaction with the signal recognition particle (SRP), which normally targets nascent secretory peptides to the ER. BTF3 is also a general transcription factor that can form a stable complex with RNA polymerase II. Required for the initiation of transcription.</text>
</comment>
<comment type="subunit">
    <text evidence="4">Part of the nascent polypeptide-associated complex (NAC), which is a heterodimer of NACA and BTF3 (via NAC-A/B domains). NAC associates with ribosomes through the BTF3/NACB subunit. Both subunits can contact nascent polypeptide chains.</text>
</comment>
<comment type="interaction">
    <interactant intactId="EBI-1054687">
        <id>P20290</id>
    </interactant>
    <interactant intactId="EBI-3923037">
        <id>Q86VG3</id>
        <label>IFTAP</label>
    </interactant>
    <organismsDiffer>false</organismsDiffer>
    <experiments>4</experiments>
</comment>
<comment type="interaction">
    <interactant intactId="EBI-1054687">
        <id>P20290</id>
    </interactant>
    <interactant intactId="EBI-359793">
        <id>P40222</id>
        <label>TXLNA</label>
    </interactant>
    <organismsDiffer>false</organismsDiffer>
    <experiments>4</experiments>
</comment>
<comment type="interaction">
    <interactant intactId="EBI-1054687">
        <id>P20290</id>
    </interactant>
    <interactant intactId="EBI-6116822">
        <id>Q8N3L3</id>
        <label>TXLNB</label>
    </interactant>
    <organismsDiffer>false</organismsDiffer>
    <experiments>3</experiments>
</comment>
<comment type="interaction">
    <interactant intactId="EBI-1054703">
        <id>P20290-2</id>
    </interactant>
    <interactant intactId="EBI-78473">
        <id>P03372</id>
        <label>ESR1</label>
    </interactant>
    <organismsDiffer>false</organismsDiffer>
    <experiments>5</experiments>
</comment>
<comment type="interaction">
    <interactant intactId="EBI-1054703">
        <id>P20290-2</id>
    </interactant>
    <interactant intactId="EBI-16356946">
        <id>Q86UY6</id>
        <label>NAA40</label>
    </interactant>
    <organismsDiffer>false</organismsDiffer>
    <experiments>3</experiments>
</comment>
<comment type="interaction">
    <interactant intactId="EBI-1054703">
        <id>P20290-2</id>
    </interactant>
    <interactant intactId="EBI-3920273">
        <id>O60551</id>
        <label>NMT2</label>
    </interactant>
    <organismsDiffer>false</organismsDiffer>
    <experiments>3</experiments>
</comment>
<comment type="interaction">
    <interactant intactId="EBI-1054703">
        <id>P20290-2</id>
    </interactant>
    <interactant intactId="EBI-17490746">
        <id>A8MTQ0</id>
        <label>NOTO</label>
    </interactant>
    <organismsDiffer>false</organismsDiffer>
    <experiments>3</experiments>
</comment>
<comment type="interaction">
    <interactant intactId="EBI-1054703">
        <id>P20290-2</id>
    </interactant>
    <interactant intactId="EBI-1055671">
        <id>Q9NRG4</id>
        <label>SMYD2</label>
    </interactant>
    <organismsDiffer>false</organismsDiffer>
    <experiments>3</experiments>
</comment>
<comment type="subcellular location">
    <subcellularLocation>
        <location evidence="3">Cytoplasm</location>
    </subcellularLocation>
    <subcellularLocation>
        <location evidence="3">Nucleus</location>
    </subcellularLocation>
    <text>The heterodimer with NACA is cytoplasmic.</text>
</comment>
<comment type="alternative products">
    <event type="alternative splicing"/>
    <isoform>
        <id>P20290-1</id>
        <name>1</name>
        <name>BTF3a</name>
        <sequence type="displayed"/>
    </isoform>
    <isoform>
        <id>P20290-2</id>
        <name>2</name>
        <name>BTF3b</name>
        <sequence type="described" ref="VSP_013587"/>
    </isoform>
</comment>
<comment type="similarity">
    <text evidence="11">Belongs to the NAC-beta family.</text>
</comment>
<protein>
    <recommendedName>
        <fullName>Transcription factor BTF3</fullName>
    </recommendedName>
    <alternativeName>
        <fullName>Nascent polypeptide-associated complex subunit beta</fullName>
        <shortName>NAC-beta</shortName>
    </alternativeName>
    <alternativeName>
        <fullName>RNA polymerase B transcription factor 3</fullName>
    </alternativeName>
</protein>
<feature type="chain" id="PRO_0000213548" description="Transcription factor BTF3">
    <location>
        <begin position="1"/>
        <end position="206"/>
    </location>
</feature>
<feature type="domain" description="NAC-A/B" evidence="1">
    <location>
        <begin position="82"/>
        <end position="147"/>
    </location>
</feature>
<feature type="region of interest" description="Disordered" evidence="2">
    <location>
        <begin position="1"/>
        <end position="42"/>
    </location>
</feature>
<feature type="region of interest" description="Disordered" evidence="2">
    <location>
        <begin position="170"/>
        <end position="206"/>
    </location>
</feature>
<feature type="compositionally biased region" description="Acidic residues" evidence="2">
    <location>
        <begin position="183"/>
        <end position="198"/>
    </location>
</feature>
<feature type="modified residue" description="Omega-N-methylarginine" evidence="14">
    <location>
        <position position="19"/>
    </location>
</feature>
<feature type="modified residue" description="Phosphoserine" evidence="12 13">
    <location>
        <position position="30"/>
    </location>
</feature>
<feature type="modified residue" description="N6-methyllysine" evidence="14">
    <location>
        <position position="46"/>
    </location>
</feature>
<feature type="modified residue" description="N6-methyllysine" evidence="14">
    <location>
        <position position="54"/>
    </location>
</feature>
<feature type="modified residue" description="Phosphothreonine" evidence="15">
    <location>
        <position position="160"/>
    </location>
</feature>
<feature type="modified residue" description="Phosphoserine" evidence="13">
    <location>
        <position position="173"/>
    </location>
</feature>
<feature type="splice variant" id="VSP_013587" description="In isoform 2." evidence="5 6 7 8 9 10">
    <location>
        <begin position="1"/>
        <end position="44"/>
    </location>
</feature>
<feature type="sequence conflict" description="In Ref. 2; AAA58398." evidence="11" ref="2">
    <original>Q</original>
    <variation>E</variation>
    <location>
        <position position="41"/>
    </location>
</feature>
<feature type="sequence conflict" description="In Ref. 2; AAA58398." evidence="11" ref="2">
    <location>
        <begin position="68"/>
        <end position="105"/>
    </location>
</feature>
<feature type="sequence conflict" description="In Ref. 2." evidence="11" ref="2">
    <original>DLVEN</original>
    <variation>GG</variation>
    <location>
        <begin position="192"/>
        <end position="196"/>
    </location>
</feature>
<feature type="sequence conflict" description="In Ref. 2." evidence="11" ref="2">
    <original>D</original>
    <variation>Q</variation>
    <location>
        <position position="198"/>
    </location>
</feature>
<feature type="strand" evidence="17">
    <location>
        <begin position="105"/>
        <end position="110"/>
    </location>
</feature>
<feature type="strand" evidence="17">
    <location>
        <begin position="113"/>
        <end position="120"/>
    </location>
</feature>
<feature type="strand" evidence="17">
    <location>
        <begin position="122"/>
        <end position="126"/>
    </location>
</feature>
<feature type="turn" evidence="17">
    <location>
        <begin position="127"/>
        <end position="130"/>
    </location>
</feature>
<feature type="strand" evidence="17">
    <location>
        <begin position="131"/>
        <end position="136"/>
    </location>
</feature>
<feature type="strand" evidence="17">
    <location>
        <begin position="138"/>
        <end position="142"/>
    </location>
</feature>
<feature type="helix" evidence="17">
    <location>
        <begin position="143"/>
        <end position="146"/>
    </location>
</feature>
<feature type="helix" evidence="17">
    <location>
        <begin position="149"/>
        <end position="153"/>
    </location>
</feature>
<feature type="helix" evidence="16">
    <location>
        <begin position="158"/>
        <end position="161"/>
    </location>
</feature>
<accession>P20290</accession>
<accession>A8K510</accession>
<accession>Q13893</accession>
<accession>Q76M56</accession>
<keyword id="KW-0002">3D-structure</keyword>
<keyword id="KW-0025">Alternative splicing</keyword>
<keyword id="KW-0143">Chaperone</keyword>
<keyword id="KW-0963">Cytoplasm</keyword>
<keyword id="KW-0488">Methylation</keyword>
<keyword id="KW-0539">Nucleus</keyword>
<keyword id="KW-0597">Phosphoprotein</keyword>
<keyword id="KW-0653">Protein transport</keyword>
<keyword id="KW-1267">Proteomics identification</keyword>
<keyword id="KW-1185">Reference proteome</keyword>
<keyword id="KW-0804">Transcription</keyword>
<keyword id="KW-0805">Transcription regulation</keyword>
<keyword id="KW-0813">Transport</keyword>
<sequence length="206" mass="22168">MRRTGAPAQADSRGRGRARGGCPGGEATLSQPPPRGGTRGQEPQMKETIMNQEKLAKLQAQVRIGGKGTARRKKKVVHRTATADDKKLQFSLKKLGVNNISGIEEVNMFTNQGTVIHFNNPKVQASLAANTFTITGHAETKQLTEMLPSILNQLGADSLTSLRRLAEALPKQSVDGKAPLATGEDDDDEVPDLVENFDEASKNEAN</sequence>
<gene>
    <name type="primary">BTF3</name>
    <name type="synonym">NACB</name>
    <name type="ORF">OK/SW-cl.8</name>
</gene>
<proteinExistence type="evidence at protein level"/>
<evidence type="ECO:0000255" key="1">
    <source>
        <dbReference type="PROSITE-ProRule" id="PRU00507"/>
    </source>
</evidence>
<evidence type="ECO:0000256" key="2">
    <source>
        <dbReference type="SAM" id="MobiDB-lite"/>
    </source>
</evidence>
<evidence type="ECO:0000269" key="3">
    <source>
    </source>
</evidence>
<evidence type="ECO:0000269" key="4">
    <source>
    </source>
</evidence>
<evidence type="ECO:0000303" key="5">
    <source>
    </source>
</evidence>
<evidence type="ECO:0000303" key="6">
    <source>
    </source>
</evidence>
<evidence type="ECO:0000303" key="7">
    <source>
    </source>
</evidence>
<evidence type="ECO:0000303" key="8">
    <source ref="3"/>
</evidence>
<evidence type="ECO:0000303" key="9">
    <source ref="4"/>
</evidence>
<evidence type="ECO:0000303" key="10">
    <source ref="5"/>
</evidence>
<evidence type="ECO:0000305" key="11"/>
<evidence type="ECO:0007744" key="12">
    <source>
    </source>
</evidence>
<evidence type="ECO:0007744" key="13">
    <source>
    </source>
</evidence>
<evidence type="ECO:0007744" key="14">
    <source>
    </source>
</evidence>
<evidence type="ECO:0007744" key="15">
    <source>
    </source>
</evidence>
<evidence type="ECO:0007829" key="16">
    <source>
        <dbReference type="PDB" id="3LKX"/>
    </source>
</evidence>
<evidence type="ECO:0007829" key="17">
    <source>
        <dbReference type="PDB" id="3MCB"/>
    </source>
</evidence>
<organism>
    <name type="scientific">Homo sapiens</name>
    <name type="common">Human</name>
    <dbReference type="NCBI Taxonomy" id="9606"/>
    <lineage>
        <taxon>Eukaryota</taxon>
        <taxon>Metazoa</taxon>
        <taxon>Chordata</taxon>
        <taxon>Craniata</taxon>
        <taxon>Vertebrata</taxon>
        <taxon>Euteleostomi</taxon>
        <taxon>Mammalia</taxon>
        <taxon>Eutheria</taxon>
        <taxon>Euarchontoglires</taxon>
        <taxon>Primates</taxon>
        <taxon>Haplorrhini</taxon>
        <taxon>Catarrhini</taxon>
        <taxon>Hominidae</taxon>
        <taxon>Homo</taxon>
    </lineage>
</organism>
<reference key="1">
    <citation type="journal article" date="1990" name="Nature">
        <title>Sequencing and expression of complementary DNA for the general transcription factor BTF3.</title>
        <authorList>
            <person name="Zheng X.M."/>
            <person name="Black D."/>
            <person name="Chambon P."/>
            <person name="Egly J.-M."/>
        </authorList>
    </citation>
    <scope>NUCLEOTIDE SEQUENCE [MRNA] (ISOFORMS 1 AND 2)</scope>
</reference>
<reference key="2">
    <citation type="journal article" date="1992" name="Gene">
        <title>Genomic structure of the putative BTF3 transcription factor.</title>
        <authorList>
            <person name="Kanno M."/>
            <person name="Chalut C."/>
            <person name="Egly J.-M."/>
        </authorList>
    </citation>
    <scope>NUCLEOTIDE SEQUENCE [GENOMIC DNA]</scope>
    <source>
        <tissue>Leukocyte</tissue>
    </source>
</reference>
<reference key="3">
    <citation type="submission" date="1993-07" db="EMBL/GenBank/DDBJ databases">
        <title>cDNA expression and human 2D-gel data bases: towards integrating protein and DNA information.</title>
        <authorList>
            <person name="Leffers H."/>
            <person name="Honore B."/>
            <person name="Madsen A."/>
            <person name="Nielsen M.S."/>
            <person name="Anderson A.H."/>
            <person name="Celis J.E."/>
        </authorList>
    </citation>
    <scope>NUCLEOTIDE SEQUENCE [MRNA] (ISOFORM 2)</scope>
</reference>
<reference key="4">
    <citation type="submission" date="2001-05" db="EMBL/GenBank/DDBJ databases">
        <title>Identification of immuno-peptidmics that are recognized by tumor-reactive CTL generated from TIL of colon cancer patients.</title>
        <authorList>
            <person name="Shichijo S."/>
            <person name="Itoh K."/>
        </authorList>
    </citation>
    <scope>NUCLEOTIDE SEQUENCE [LARGE SCALE MRNA] (ISOFORM 2)</scope>
    <source>
        <tissue>Colon adenocarcinoma</tissue>
    </source>
</reference>
<reference key="5">
    <citation type="submission" date="2003-05" db="EMBL/GenBank/DDBJ databases">
        <title>Cloning of human full-length CDSs in BD Creator(TM) system donor vector.</title>
        <authorList>
            <person name="Kalnine N."/>
            <person name="Chen X."/>
            <person name="Rolfs A."/>
            <person name="Halleck A."/>
            <person name="Hines L."/>
            <person name="Eisenstein S."/>
            <person name="Koundinya M."/>
            <person name="Raphael J."/>
            <person name="Moreira D."/>
            <person name="Kelley T."/>
            <person name="LaBaer J."/>
            <person name="Lin Y."/>
            <person name="Phelan M."/>
            <person name="Farmer A."/>
        </authorList>
    </citation>
    <scope>NUCLEOTIDE SEQUENCE [LARGE SCALE MRNA] (ISOFORM 2)</scope>
</reference>
<reference key="6">
    <citation type="journal article" date="2004" name="Nat. Genet.">
        <title>Complete sequencing and characterization of 21,243 full-length human cDNAs.</title>
        <authorList>
            <person name="Ota T."/>
            <person name="Suzuki Y."/>
            <person name="Nishikawa T."/>
            <person name="Otsuki T."/>
            <person name="Sugiyama T."/>
            <person name="Irie R."/>
            <person name="Wakamatsu A."/>
            <person name="Hayashi K."/>
            <person name="Sato H."/>
            <person name="Nagai K."/>
            <person name="Kimura K."/>
            <person name="Makita H."/>
            <person name="Sekine M."/>
            <person name="Obayashi M."/>
            <person name="Nishi T."/>
            <person name="Shibahara T."/>
            <person name="Tanaka T."/>
            <person name="Ishii S."/>
            <person name="Yamamoto J."/>
            <person name="Saito K."/>
            <person name="Kawai Y."/>
            <person name="Isono Y."/>
            <person name="Nakamura Y."/>
            <person name="Nagahari K."/>
            <person name="Murakami K."/>
            <person name="Yasuda T."/>
            <person name="Iwayanagi T."/>
            <person name="Wagatsuma M."/>
            <person name="Shiratori A."/>
            <person name="Sudo H."/>
            <person name="Hosoiri T."/>
            <person name="Kaku Y."/>
            <person name="Kodaira H."/>
            <person name="Kondo H."/>
            <person name="Sugawara M."/>
            <person name="Takahashi M."/>
            <person name="Kanda K."/>
            <person name="Yokoi T."/>
            <person name="Furuya T."/>
            <person name="Kikkawa E."/>
            <person name="Omura Y."/>
            <person name="Abe K."/>
            <person name="Kamihara K."/>
            <person name="Katsuta N."/>
            <person name="Sato K."/>
            <person name="Tanikawa M."/>
            <person name="Yamazaki M."/>
            <person name="Ninomiya K."/>
            <person name="Ishibashi T."/>
            <person name="Yamashita H."/>
            <person name="Murakawa K."/>
            <person name="Fujimori K."/>
            <person name="Tanai H."/>
            <person name="Kimata M."/>
            <person name="Watanabe M."/>
            <person name="Hiraoka S."/>
            <person name="Chiba Y."/>
            <person name="Ishida S."/>
            <person name="Ono Y."/>
            <person name="Takiguchi S."/>
            <person name="Watanabe S."/>
            <person name="Yosida M."/>
            <person name="Hotuta T."/>
            <person name="Kusano J."/>
            <person name="Kanehori K."/>
            <person name="Takahashi-Fujii A."/>
            <person name="Hara H."/>
            <person name="Tanase T.-O."/>
            <person name="Nomura Y."/>
            <person name="Togiya S."/>
            <person name="Komai F."/>
            <person name="Hara R."/>
            <person name="Takeuchi K."/>
            <person name="Arita M."/>
            <person name="Imose N."/>
            <person name="Musashino K."/>
            <person name="Yuuki H."/>
            <person name="Oshima A."/>
            <person name="Sasaki N."/>
            <person name="Aotsuka S."/>
            <person name="Yoshikawa Y."/>
            <person name="Matsunawa H."/>
            <person name="Ichihara T."/>
            <person name="Shiohata N."/>
            <person name="Sano S."/>
            <person name="Moriya S."/>
            <person name="Momiyama H."/>
            <person name="Satoh N."/>
            <person name="Takami S."/>
            <person name="Terashima Y."/>
            <person name="Suzuki O."/>
            <person name="Nakagawa S."/>
            <person name="Senoh A."/>
            <person name="Mizoguchi H."/>
            <person name="Goto Y."/>
            <person name="Shimizu F."/>
            <person name="Wakebe H."/>
            <person name="Hishigaki H."/>
            <person name="Watanabe T."/>
            <person name="Sugiyama A."/>
            <person name="Takemoto M."/>
            <person name="Kawakami B."/>
            <person name="Yamazaki M."/>
            <person name="Watanabe K."/>
            <person name="Kumagai A."/>
            <person name="Itakura S."/>
            <person name="Fukuzumi Y."/>
            <person name="Fujimori Y."/>
            <person name="Komiyama M."/>
            <person name="Tashiro H."/>
            <person name="Tanigami A."/>
            <person name="Fujiwara T."/>
            <person name="Ono T."/>
            <person name="Yamada K."/>
            <person name="Fujii Y."/>
            <person name="Ozaki K."/>
            <person name="Hirao M."/>
            <person name="Ohmori Y."/>
            <person name="Kawabata A."/>
            <person name="Hikiji T."/>
            <person name="Kobatake N."/>
            <person name="Inagaki H."/>
            <person name="Ikema Y."/>
            <person name="Okamoto S."/>
            <person name="Okitani R."/>
            <person name="Kawakami T."/>
            <person name="Noguchi S."/>
            <person name="Itoh T."/>
            <person name="Shigeta K."/>
            <person name="Senba T."/>
            <person name="Matsumura K."/>
            <person name="Nakajima Y."/>
            <person name="Mizuno T."/>
            <person name="Morinaga M."/>
            <person name="Sasaki M."/>
            <person name="Togashi T."/>
            <person name="Oyama M."/>
            <person name="Hata H."/>
            <person name="Watanabe M."/>
            <person name="Komatsu T."/>
            <person name="Mizushima-Sugano J."/>
            <person name="Satoh T."/>
            <person name="Shirai Y."/>
            <person name="Takahashi Y."/>
            <person name="Nakagawa K."/>
            <person name="Okumura K."/>
            <person name="Nagase T."/>
            <person name="Nomura N."/>
            <person name="Kikuchi H."/>
            <person name="Masuho Y."/>
            <person name="Yamashita R."/>
            <person name="Nakai K."/>
            <person name="Yada T."/>
            <person name="Nakamura Y."/>
            <person name="Ohara O."/>
            <person name="Isogai T."/>
            <person name="Sugano S."/>
        </authorList>
    </citation>
    <scope>NUCLEOTIDE SEQUENCE [LARGE SCALE MRNA] (ISOFORM 2)</scope>
</reference>
<reference key="7">
    <citation type="submission" date="2005-07" db="EMBL/GenBank/DDBJ databases">
        <authorList>
            <person name="Mural R.J."/>
            <person name="Istrail S."/>
            <person name="Sutton G.G."/>
            <person name="Florea L."/>
            <person name="Halpern A.L."/>
            <person name="Mobarry C.M."/>
            <person name="Lippert R."/>
            <person name="Walenz B."/>
            <person name="Shatkay H."/>
            <person name="Dew I."/>
            <person name="Miller J.R."/>
            <person name="Flanigan M.J."/>
            <person name="Edwards N.J."/>
            <person name="Bolanos R."/>
            <person name="Fasulo D."/>
            <person name="Halldorsson B.V."/>
            <person name="Hannenhalli S."/>
            <person name="Turner R."/>
            <person name="Yooseph S."/>
            <person name="Lu F."/>
            <person name="Nusskern D.R."/>
            <person name="Shue B.C."/>
            <person name="Zheng X.H."/>
            <person name="Zhong F."/>
            <person name="Delcher A.L."/>
            <person name="Huson D.H."/>
            <person name="Kravitz S.A."/>
            <person name="Mouchard L."/>
            <person name="Reinert K."/>
            <person name="Remington K.A."/>
            <person name="Clark A.G."/>
            <person name="Waterman M.S."/>
            <person name="Eichler E.E."/>
            <person name="Adams M.D."/>
            <person name="Hunkapiller M.W."/>
            <person name="Myers E.W."/>
            <person name="Venter J.C."/>
        </authorList>
    </citation>
    <scope>NUCLEOTIDE SEQUENCE [LARGE SCALE GENOMIC DNA]</scope>
</reference>
<reference key="8">
    <citation type="journal article" date="2004" name="Genome Res.">
        <title>The status, quality, and expansion of the NIH full-length cDNA project: the Mammalian Gene Collection (MGC).</title>
        <authorList>
            <consortium name="The MGC Project Team"/>
        </authorList>
    </citation>
    <scope>NUCLEOTIDE SEQUENCE [LARGE SCALE MRNA] (ISOFORM 2)</scope>
    <source>
        <tissue>Skin</tissue>
    </source>
</reference>
<reference key="9">
    <citation type="journal article" date="2000" name="J. Biol. Chem.">
        <title>The alpha and beta subunit of the nascent polypeptide-associated complex have distinct functions.</title>
        <authorList>
            <person name="Beatrix B."/>
            <person name="Sakai H."/>
            <person name="Wiedmann M."/>
        </authorList>
    </citation>
    <scope>FUNCTION</scope>
    <scope>INTERACTION WITH NACA</scope>
    <scope>ASSOCIATION WITH RIBOSOMES</scope>
    <scope>SUBCELLULAR LOCATION</scope>
</reference>
<reference key="10">
    <citation type="journal article" date="2007" name="Science">
        <title>ATM and ATR substrate analysis reveals extensive protein networks responsive to DNA damage.</title>
        <authorList>
            <person name="Matsuoka S."/>
            <person name="Ballif B.A."/>
            <person name="Smogorzewska A."/>
            <person name="McDonald E.R. III"/>
            <person name="Hurov K.E."/>
            <person name="Luo J."/>
            <person name="Bakalarski C.E."/>
            <person name="Zhao Z."/>
            <person name="Solimini N."/>
            <person name="Lerenthal Y."/>
            <person name="Shiloh Y."/>
            <person name="Gygi S.P."/>
            <person name="Elledge S.J."/>
        </authorList>
    </citation>
    <scope>PHOSPHORYLATION [LARGE SCALE ANALYSIS] AT SER-30</scope>
    <scope>IDENTIFICATION BY MASS SPECTROMETRY [LARGE SCALE ANALYSIS]</scope>
    <source>
        <tissue>Embryonic kidney</tissue>
    </source>
</reference>
<reference key="11">
    <citation type="journal article" date="2011" name="BMC Syst. Biol.">
        <title>Initial characterization of the human central proteome.</title>
        <authorList>
            <person name="Burkard T.R."/>
            <person name="Planyavsky M."/>
            <person name="Kaupe I."/>
            <person name="Breitwieser F.P."/>
            <person name="Buerckstuemmer T."/>
            <person name="Bennett K.L."/>
            <person name="Superti-Furga G."/>
            <person name="Colinge J."/>
        </authorList>
    </citation>
    <scope>IDENTIFICATION BY MASS SPECTROMETRY [LARGE SCALE ANALYSIS]</scope>
</reference>
<reference key="12">
    <citation type="journal article" date="2013" name="J. Proteome Res.">
        <title>Toward a comprehensive characterization of a human cancer cell phosphoproteome.</title>
        <authorList>
            <person name="Zhou H."/>
            <person name="Di Palma S."/>
            <person name="Preisinger C."/>
            <person name="Peng M."/>
            <person name="Polat A.N."/>
            <person name="Heck A.J."/>
            <person name="Mohammed S."/>
        </authorList>
    </citation>
    <scope>PHOSPHORYLATION [LARGE SCALE ANALYSIS] AT SER-30 AND SER-173</scope>
    <scope>IDENTIFICATION BY MASS SPECTROMETRY [LARGE SCALE ANALYSIS]</scope>
    <source>
        <tissue>Cervix carcinoma</tissue>
        <tissue>Erythroleukemia</tissue>
    </source>
</reference>
<reference key="13">
    <citation type="journal article" date="2014" name="J. Proteomics">
        <title>An enzyme assisted RP-RPLC approach for in-depth analysis of human liver phosphoproteome.</title>
        <authorList>
            <person name="Bian Y."/>
            <person name="Song C."/>
            <person name="Cheng K."/>
            <person name="Dong M."/>
            <person name="Wang F."/>
            <person name="Huang J."/>
            <person name="Sun D."/>
            <person name="Wang L."/>
            <person name="Ye M."/>
            <person name="Zou H."/>
        </authorList>
    </citation>
    <scope>PHOSPHORYLATION [LARGE SCALE ANALYSIS] AT THR-160</scope>
    <scope>IDENTIFICATION BY MASS SPECTROMETRY [LARGE SCALE ANALYSIS]</scope>
    <source>
        <tissue>Liver</tissue>
    </source>
</reference>
<reference key="14">
    <citation type="journal article" date="2014" name="Mol. Cell. Proteomics">
        <title>Immunoaffinity enrichment and mass spectrometry analysis of protein methylation.</title>
        <authorList>
            <person name="Guo A."/>
            <person name="Gu H."/>
            <person name="Zhou J."/>
            <person name="Mulhern D."/>
            <person name="Wang Y."/>
            <person name="Lee K.A."/>
            <person name="Yang V."/>
            <person name="Aguiar M."/>
            <person name="Kornhauser J."/>
            <person name="Jia X."/>
            <person name="Ren J."/>
            <person name="Beausoleil S.A."/>
            <person name="Silva J.C."/>
            <person name="Vemulapalli V."/>
            <person name="Bedford M.T."/>
            <person name="Comb M.J."/>
        </authorList>
    </citation>
    <scope>METHYLATION [LARGE SCALE ANALYSIS] AT ARG-19; LYS-46 AND LYS-54</scope>
    <scope>IDENTIFICATION BY MASS SPECTROMETRY [LARGE SCALE ANALYSIS]</scope>
    <source>
        <tissue>Colon carcinoma</tissue>
    </source>
</reference>
<reference key="15">
    <citation type="journal article" date="2015" name="Proteomics">
        <title>N-terminome analysis of the human mitochondrial proteome.</title>
        <authorList>
            <person name="Vaca Jacome A.S."/>
            <person name="Rabilloud T."/>
            <person name="Schaeffer-Reiss C."/>
            <person name="Rompais M."/>
            <person name="Ayoub D."/>
            <person name="Lane L."/>
            <person name="Bairoch A."/>
            <person name="Van Dorsselaer A."/>
            <person name="Carapito C."/>
        </authorList>
    </citation>
    <scope>IDENTIFICATION BY MASS SPECTROMETRY [LARGE SCALE ANALYSIS]</scope>
</reference>
<reference key="16">
    <citation type="journal article" date="2010" name="Protein Cell">
        <title>Crystal structures of NAC domains of human nascent polypeptide-associated complex (NAC) and its alphaNAC subunit.</title>
        <authorList>
            <person name="Wang L."/>
            <person name="Zhang W."/>
            <person name="Wang L."/>
            <person name="Zhang X.C."/>
            <person name="Li X."/>
            <person name="Rao Z."/>
        </authorList>
    </citation>
    <scope>X-RAY CRYSTALLOGRAPHY (1.9 ANGSTROMS) OF 97-154</scope>
    <scope>SUBUNIT</scope>
</reference>
<name>BTF3_HUMAN</name>